<evidence type="ECO:0000250" key="1"/>
<evidence type="ECO:0000269" key="2">
    <source>
    </source>
</evidence>
<evidence type="ECO:0000269" key="3">
    <source>
    </source>
</evidence>
<evidence type="ECO:0000269" key="4">
    <source>
    </source>
</evidence>
<evidence type="ECO:0000269" key="5">
    <source>
    </source>
</evidence>
<evidence type="ECO:0000269" key="6">
    <source>
    </source>
</evidence>
<evidence type="ECO:0000269" key="7">
    <source>
    </source>
</evidence>
<evidence type="ECO:0000305" key="8"/>
<accession>P24704</accession>
<accession>A3FMJ0</accession>
<accession>Q9FRQ6</accession>
<protein>
    <recommendedName>
        <fullName>Superoxide dismutase [Cu-Zn] 1</fullName>
        <ecNumber>1.15.1.1</ecNumber>
    </recommendedName>
    <alternativeName>
        <fullName>Copper/zinc superoxide dismutase 1</fullName>
    </alternativeName>
</protein>
<organism>
    <name type="scientific">Arabidopsis thaliana</name>
    <name type="common">Mouse-ear cress</name>
    <dbReference type="NCBI Taxonomy" id="3702"/>
    <lineage>
        <taxon>Eukaryota</taxon>
        <taxon>Viridiplantae</taxon>
        <taxon>Streptophyta</taxon>
        <taxon>Embryophyta</taxon>
        <taxon>Tracheophyta</taxon>
        <taxon>Spermatophyta</taxon>
        <taxon>Magnoliopsida</taxon>
        <taxon>eudicotyledons</taxon>
        <taxon>Gunneridae</taxon>
        <taxon>Pentapetalae</taxon>
        <taxon>rosids</taxon>
        <taxon>malvids</taxon>
        <taxon>Brassicales</taxon>
        <taxon>Brassicaceae</taxon>
        <taxon>Camelineae</taxon>
        <taxon>Arabidopsis</taxon>
    </lineage>
</organism>
<comment type="function">
    <text>Destroys radicals which are normally produced within the cells and which are toxic to biological systems.</text>
</comment>
<comment type="catalytic activity">
    <reaction>
        <text>2 superoxide + 2 H(+) = H2O2 + O2</text>
        <dbReference type="Rhea" id="RHEA:20696"/>
        <dbReference type="ChEBI" id="CHEBI:15378"/>
        <dbReference type="ChEBI" id="CHEBI:15379"/>
        <dbReference type="ChEBI" id="CHEBI:16240"/>
        <dbReference type="ChEBI" id="CHEBI:18421"/>
        <dbReference type="EC" id="1.15.1.1"/>
    </reaction>
</comment>
<comment type="cofactor">
    <cofactor evidence="1">
        <name>Cu cation</name>
        <dbReference type="ChEBI" id="CHEBI:23378"/>
    </cofactor>
    <text evidence="1">Binds 1 copper ion per subunit.</text>
</comment>
<comment type="cofactor">
    <cofactor evidence="1">
        <name>Zn(2+)</name>
        <dbReference type="ChEBI" id="CHEBI:29105"/>
    </cofactor>
    <text evidence="1">Binds 1 zinc ion per subunit.</text>
</comment>
<comment type="subunit">
    <text evidence="2 6">Homodimer. Interacts with DJ1A and CCS.</text>
</comment>
<comment type="subcellular location">
    <subcellularLocation>
        <location evidence="6">Cytoplasm</location>
        <location evidence="6">Cytosol</location>
    </subcellularLocation>
    <subcellularLocation>
        <location evidence="6">Nucleus</location>
    </subcellularLocation>
</comment>
<comment type="tissue specificity">
    <text evidence="3 7">Expressed in leaves (at protein level). The spatial localization is regulated by miR398-mediated silencing. Mostly present in flowers, old rosette leaves and inflorescence, and, to a lower extent, in cauline leaves, stems and roots.</text>
</comment>
<comment type="induction">
    <text evidence="3 4 5 7">Upon photosynthetically active radiation (PAR) (e.g. light fluence) increase and UV-B treatment. Accumulates in response to ozone fumigation. Induced in response to oxidative stress, via a reduction of miR398-mediated silencing. Repressed by sucrose in a miR398-mediated silencing-dependent manner. Induced by salt stress.</text>
</comment>
<comment type="similarity">
    <text evidence="8">Belongs to the Cu-Zn superoxide dismutase family.</text>
</comment>
<comment type="sequence caution" evidence="8">
    <conflict type="erroneous gene model prediction">
        <sequence resource="EMBL-CDS" id="AAF99769"/>
    </conflict>
</comment>
<reference key="1">
    <citation type="journal article" date="1992" name="Plant Mol. Biol.">
        <title>cDNA and derived amino acid sequence of a cytosolic Cu,Zn superoxide dismutase from Arabidopsis thaliana (L.) Heyhn.</title>
        <authorList>
            <person name="Hindges R."/>
            <person name="Slusarenko A.J."/>
        </authorList>
    </citation>
    <scope>NUCLEOTIDE SEQUENCE [MRNA]</scope>
    <source>
        <strain>cv. Columbia</strain>
        <tissue>Leaf</tissue>
        <tissue>Stem</tissue>
    </source>
</reference>
<reference key="2">
    <citation type="submission" date="2007-01" db="EMBL/GenBank/DDBJ databases">
        <title>Copper, zinc superoxide dismutase [Arabidopsis thaliana].</title>
        <authorList>
            <person name="Rani A."/>
            <person name="Kumar S."/>
        </authorList>
    </citation>
    <scope>NUCLEOTIDE SEQUENCE [MRNA]</scope>
    <source>
        <strain>cv. Columbia</strain>
    </source>
</reference>
<reference key="3">
    <citation type="journal article" date="2000" name="Nature">
        <title>Sequence and analysis of chromosome 1 of the plant Arabidopsis thaliana.</title>
        <authorList>
            <person name="Theologis A."/>
            <person name="Ecker J.R."/>
            <person name="Palm C.J."/>
            <person name="Federspiel N.A."/>
            <person name="Kaul S."/>
            <person name="White O."/>
            <person name="Alonso J."/>
            <person name="Altafi H."/>
            <person name="Araujo R."/>
            <person name="Bowman C.L."/>
            <person name="Brooks S.Y."/>
            <person name="Buehler E."/>
            <person name="Chan A."/>
            <person name="Chao Q."/>
            <person name="Chen H."/>
            <person name="Cheuk R.F."/>
            <person name="Chin C.W."/>
            <person name="Chung M.K."/>
            <person name="Conn L."/>
            <person name="Conway A.B."/>
            <person name="Conway A.R."/>
            <person name="Creasy T.H."/>
            <person name="Dewar K."/>
            <person name="Dunn P."/>
            <person name="Etgu P."/>
            <person name="Feldblyum T.V."/>
            <person name="Feng J.-D."/>
            <person name="Fong B."/>
            <person name="Fujii C.Y."/>
            <person name="Gill J.E."/>
            <person name="Goldsmith A.D."/>
            <person name="Haas B."/>
            <person name="Hansen N.F."/>
            <person name="Hughes B."/>
            <person name="Huizar L."/>
            <person name="Hunter J.L."/>
            <person name="Jenkins J."/>
            <person name="Johnson-Hopson C."/>
            <person name="Khan S."/>
            <person name="Khaykin E."/>
            <person name="Kim C.J."/>
            <person name="Koo H.L."/>
            <person name="Kremenetskaia I."/>
            <person name="Kurtz D.B."/>
            <person name="Kwan A."/>
            <person name="Lam B."/>
            <person name="Langin-Hooper S."/>
            <person name="Lee A."/>
            <person name="Lee J.M."/>
            <person name="Lenz C.A."/>
            <person name="Li J.H."/>
            <person name="Li Y.-P."/>
            <person name="Lin X."/>
            <person name="Liu S.X."/>
            <person name="Liu Z.A."/>
            <person name="Luros J.S."/>
            <person name="Maiti R."/>
            <person name="Marziali A."/>
            <person name="Militscher J."/>
            <person name="Miranda M."/>
            <person name="Nguyen M."/>
            <person name="Nierman W.C."/>
            <person name="Osborne B.I."/>
            <person name="Pai G."/>
            <person name="Peterson J."/>
            <person name="Pham P.K."/>
            <person name="Rizzo M."/>
            <person name="Rooney T."/>
            <person name="Rowley D."/>
            <person name="Sakano H."/>
            <person name="Salzberg S.L."/>
            <person name="Schwartz J.R."/>
            <person name="Shinn P."/>
            <person name="Southwick A.M."/>
            <person name="Sun H."/>
            <person name="Tallon L.J."/>
            <person name="Tambunga G."/>
            <person name="Toriumi M.J."/>
            <person name="Town C.D."/>
            <person name="Utterback T."/>
            <person name="Van Aken S."/>
            <person name="Vaysberg M."/>
            <person name="Vysotskaia V.S."/>
            <person name="Walker M."/>
            <person name="Wu D."/>
            <person name="Yu G."/>
            <person name="Fraser C.M."/>
            <person name="Venter J.C."/>
            <person name="Davis R.W."/>
        </authorList>
    </citation>
    <scope>NUCLEOTIDE SEQUENCE [LARGE SCALE GENOMIC DNA]</scope>
    <source>
        <strain>cv. Columbia</strain>
    </source>
</reference>
<reference key="4">
    <citation type="journal article" date="2017" name="Plant J.">
        <title>Araport11: a complete reannotation of the Arabidopsis thaliana reference genome.</title>
        <authorList>
            <person name="Cheng C.Y."/>
            <person name="Krishnakumar V."/>
            <person name="Chan A.P."/>
            <person name="Thibaud-Nissen F."/>
            <person name="Schobel S."/>
            <person name="Town C.D."/>
        </authorList>
    </citation>
    <scope>GENOME REANNOTATION</scope>
    <source>
        <strain>cv. Columbia</strain>
    </source>
</reference>
<reference key="5">
    <citation type="journal article" date="2003" name="Science">
        <title>Empirical analysis of transcriptional activity in the Arabidopsis genome.</title>
        <authorList>
            <person name="Yamada K."/>
            <person name="Lim J."/>
            <person name="Dale J.M."/>
            <person name="Chen H."/>
            <person name="Shinn P."/>
            <person name="Palm C.J."/>
            <person name="Southwick A.M."/>
            <person name="Wu H.C."/>
            <person name="Kim C.J."/>
            <person name="Nguyen M."/>
            <person name="Pham P.K."/>
            <person name="Cheuk R.F."/>
            <person name="Karlin-Newmann G."/>
            <person name="Liu S.X."/>
            <person name="Lam B."/>
            <person name="Sakano H."/>
            <person name="Wu T."/>
            <person name="Yu G."/>
            <person name="Miranda M."/>
            <person name="Quach H.L."/>
            <person name="Tripp M."/>
            <person name="Chang C.H."/>
            <person name="Lee J.M."/>
            <person name="Toriumi M.J."/>
            <person name="Chan M.M."/>
            <person name="Tang C.C."/>
            <person name="Onodera C.S."/>
            <person name="Deng J.M."/>
            <person name="Akiyama K."/>
            <person name="Ansari Y."/>
            <person name="Arakawa T."/>
            <person name="Banh J."/>
            <person name="Banno F."/>
            <person name="Bowser L."/>
            <person name="Brooks S.Y."/>
            <person name="Carninci P."/>
            <person name="Chao Q."/>
            <person name="Choy N."/>
            <person name="Enju A."/>
            <person name="Goldsmith A.D."/>
            <person name="Gurjal M."/>
            <person name="Hansen N.F."/>
            <person name="Hayashizaki Y."/>
            <person name="Johnson-Hopson C."/>
            <person name="Hsuan V.W."/>
            <person name="Iida K."/>
            <person name="Karnes M."/>
            <person name="Khan S."/>
            <person name="Koesema E."/>
            <person name="Ishida J."/>
            <person name="Jiang P.X."/>
            <person name="Jones T."/>
            <person name="Kawai J."/>
            <person name="Kamiya A."/>
            <person name="Meyers C."/>
            <person name="Nakajima M."/>
            <person name="Narusaka M."/>
            <person name="Seki M."/>
            <person name="Sakurai T."/>
            <person name="Satou M."/>
            <person name="Tamse R."/>
            <person name="Vaysberg M."/>
            <person name="Wallender E.K."/>
            <person name="Wong C."/>
            <person name="Yamamura Y."/>
            <person name="Yuan S."/>
            <person name="Shinozaki K."/>
            <person name="Davis R.W."/>
            <person name="Theologis A."/>
            <person name="Ecker J.R."/>
        </authorList>
    </citation>
    <scope>NUCLEOTIDE SEQUENCE [LARGE SCALE MRNA]</scope>
    <source>
        <strain>cv. Columbia</strain>
    </source>
</reference>
<reference key="6">
    <citation type="submission" date="2002-03" db="EMBL/GenBank/DDBJ databases">
        <title>Full-length cDNA from Arabidopsis thaliana.</title>
        <authorList>
            <person name="Brover V.V."/>
            <person name="Troukhan M.E."/>
            <person name="Alexandrov N.A."/>
            <person name="Lu Y.-P."/>
            <person name="Flavell R.B."/>
            <person name="Feldmann K.A."/>
        </authorList>
    </citation>
    <scope>NUCLEOTIDE SEQUENCE [LARGE SCALE MRNA]</scope>
</reference>
<reference key="7">
    <citation type="journal article" date="1998" name="Plant Physiol.">
        <title>Superoxide dismutase in Arabidopsis: an eclectic enzyme family with disparate regulation and protein localization.</title>
        <authorList>
            <person name="Kliebenstein D.J."/>
            <person name="Monde R.A."/>
            <person name="Last R.L."/>
        </authorList>
    </citation>
    <scope>TISSUE SPECIFICITY</scope>
    <scope>INDUCTION BY LIGHT; UV-B AND OZONE</scope>
    <scope>GENE FAMILY</scope>
</reference>
<reference key="8">
    <citation type="journal article" date="2005" name="Plant Physiol.">
        <title>A copper chaperone for superoxide dismutase that confers three types of copper/zinc superoxide dismutase activity in Arabidopsis.</title>
        <authorList>
            <person name="Chu C.C."/>
            <person name="Lee W.C."/>
            <person name="Guo W.Y."/>
            <person name="Pan S.M."/>
            <person name="Chen L.J."/>
            <person name="Li H.M."/>
            <person name="Jinn T.L."/>
        </authorList>
    </citation>
    <scope>INTERACTION WITH CCS</scope>
</reference>
<reference key="9">
    <citation type="journal article" date="2006" name="Plant Cell">
        <title>Posttranscriptional induction of two Cu/Zn superoxide dismutase genes in Arabidopsis is mediated by downregulation of miR398 and important for oxidative stress tolerance.</title>
        <authorList>
            <person name="Sunkar R."/>
            <person name="Kapoor A."/>
            <person name="Zhu J.-K."/>
        </authorList>
    </citation>
    <scope>TISSUE SPECIFICITY</scope>
    <scope>INDUCTION BY OXIDATIVE STRESS</scope>
</reference>
<reference key="10">
    <citation type="journal article" date="2008" name="Physiol. Plantarum">
        <title>Long-term effects of mild salt stress on growth, ion accumulation and superoxide dismutase expression of Arabidopsis rosette leaves.</title>
        <authorList>
            <person name="Attia H."/>
            <person name="Arnaud N."/>
            <person name="Karray N."/>
            <person name="Lachaal M."/>
        </authorList>
    </citation>
    <scope>INDUCTION BY SALT</scope>
    <source>
        <strain>cv. Columbia</strain>
    </source>
</reference>
<reference key="11">
    <citation type="journal article" date="2008" name="Plant Mol. Biol.">
        <title>Sucrose induction of Arabidopsis miR398 represses two Cu/Zn superoxide dismutases.</title>
        <authorList>
            <person name="Dugas D.V."/>
            <person name="Bartel B."/>
        </authorList>
    </citation>
    <scope>INDUCTION BY SUCROSE</scope>
    <source>
        <strain>cv. Columbia</strain>
    </source>
</reference>
<reference key="12">
    <citation type="journal article" date="2010" name="J. Cell Sci.">
        <title>The Arabidopsis DJ-1a protein confers stress protection through cytosolic SOD activation.</title>
        <authorList>
            <person name="Xu X.M."/>
            <person name="Lin H."/>
            <person name="Maple J."/>
            <person name="Bjoerkblom B."/>
            <person name="Alves G."/>
            <person name="Larsen J.P."/>
            <person name="Moeller S.G."/>
        </authorList>
    </citation>
    <scope>SUBCELLULAR LOCATION</scope>
    <scope>INTERACTION WITH DJ1A</scope>
</reference>
<sequence length="152" mass="15098">MAKGVAVLNSSEGVTGTIFFTQEGDGVTTVSGTVSGLKPGLHGFHVHALGDTTNGCMSTGPHFNPDGKTHGAPEDANRHAGDLGNITVGDDGTATFTITDCQIPLTGPNSIVGRAVVVHADPDDLGKGGHELSLATGNAGGRVACGIIGLQG</sequence>
<dbReference type="EC" id="1.15.1.1"/>
<dbReference type="EMBL" id="X60935">
    <property type="protein sequence ID" value="CAA43270.1"/>
    <property type="molecule type" value="mRNA"/>
</dbReference>
<dbReference type="EMBL" id="EF408820">
    <property type="protein sequence ID" value="ABN50366.1"/>
    <property type="molecule type" value="mRNA"/>
</dbReference>
<dbReference type="EMBL" id="AC003981">
    <property type="protein sequence ID" value="AAF99769.1"/>
    <property type="status" value="ALT_SEQ"/>
    <property type="molecule type" value="Genomic_DNA"/>
</dbReference>
<dbReference type="EMBL" id="CP002684">
    <property type="protein sequence ID" value="AEE28354.1"/>
    <property type="molecule type" value="Genomic_DNA"/>
</dbReference>
<dbReference type="EMBL" id="CP002684">
    <property type="protein sequence ID" value="AEE28355.1"/>
    <property type="molecule type" value="Genomic_DNA"/>
</dbReference>
<dbReference type="EMBL" id="AY091168">
    <property type="protein sequence ID" value="AAM14107.1"/>
    <property type="molecule type" value="mRNA"/>
</dbReference>
<dbReference type="EMBL" id="AY050932">
    <property type="protein sequence ID" value="AAK93609.1"/>
    <property type="molecule type" value="mRNA"/>
</dbReference>
<dbReference type="EMBL" id="AY087273">
    <property type="protein sequence ID" value="AAM64826.1"/>
    <property type="molecule type" value="mRNA"/>
</dbReference>
<dbReference type="PIR" id="S19117">
    <property type="entry name" value="DSMUZ"/>
</dbReference>
<dbReference type="RefSeq" id="NP_001077494.1">
    <property type="nucleotide sequence ID" value="NM_001084025.1"/>
</dbReference>
<dbReference type="RefSeq" id="NP_172360.1">
    <property type="nucleotide sequence ID" value="NM_100757.4"/>
</dbReference>
<dbReference type="SMR" id="P24704"/>
<dbReference type="BioGRID" id="22646">
    <property type="interactions" value="5"/>
</dbReference>
<dbReference type="FunCoup" id="P24704">
    <property type="interactions" value="2029"/>
</dbReference>
<dbReference type="IntAct" id="P24704">
    <property type="interactions" value="1"/>
</dbReference>
<dbReference type="STRING" id="3702.P24704"/>
<dbReference type="PaxDb" id="3702-AT1G08830.1"/>
<dbReference type="ProteomicsDB" id="234479"/>
<dbReference type="EnsemblPlants" id="AT1G08830.1">
    <property type="protein sequence ID" value="AT1G08830.1"/>
    <property type="gene ID" value="AT1G08830"/>
</dbReference>
<dbReference type="EnsemblPlants" id="AT1G08830.2">
    <property type="protein sequence ID" value="AT1G08830.2"/>
    <property type="gene ID" value="AT1G08830"/>
</dbReference>
<dbReference type="GeneID" id="837405"/>
<dbReference type="Gramene" id="AT1G08830.1">
    <property type="protein sequence ID" value="AT1G08830.1"/>
    <property type="gene ID" value="AT1G08830"/>
</dbReference>
<dbReference type="Gramene" id="AT1G08830.2">
    <property type="protein sequence ID" value="AT1G08830.2"/>
    <property type="gene ID" value="AT1G08830"/>
</dbReference>
<dbReference type="KEGG" id="ath:AT1G08830"/>
<dbReference type="Araport" id="AT1G08830"/>
<dbReference type="TAIR" id="AT1G08830">
    <property type="gene designation" value="CSD1"/>
</dbReference>
<dbReference type="eggNOG" id="KOG0441">
    <property type="taxonomic scope" value="Eukaryota"/>
</dbReference>
<dbReference type="HOGENOM" id="CLU_056632_4_1_1"/>
<dbReference type="InParanoid" id="P24704"/>
<dbReference type="OMA" id="GARYACG"/>
<dbReference type="OrthoDB" id="2015551at2759"/>
<dbReference type="PhylomeDB" id="P24704"/>
<dbReference type="BioCyc" id="ARA:AT1G08830-MONOMER"/>
<dbReference type="BioCyc" id="MetaCyc:AT1G08830-MONOMER"/>
<dbReference type="BRENDA" id="1.15.1.1">
    <property type="organism ID" value="399"/>
</dbReference>
<dbReference type="PRO" id="PR:P24704"/>
<dbReference type="Proteomes" id="UP000006548">
    <property type="component" value="Chromosome 1"/>
</dbReference>
<dbReference type="ExpressionAtlas" id="P24704">
    <property type="expression patterns" value="baseline and differential"/>
</dbReference>
<dbReference type="GO" id="GO:0005829">
    <property type="term" value="C:cytosol"/>
    <property type="evidence" value="ECO:0000314"/>
    <property type="project" value="UniProtKB"/>
</dbReference>
<dbReference type="GO" id="GO:0005634">
    <property type="term" value="C:nucleus"/>
    <property type="evidence" value="ECO:0000314"/>
    <property type="project" value="UniProtKB"/>
</dbReference>
<dbReference type="GO" id="GO:0005507">
    <property type="term" value="F:copper ion binding"/>
    <property type="evidence" value="ECO:0007669"/>
    <property type="project" value="InterPro"/>
</dbReference>
<dbReference type="GO" id="GO:0004784">
    <property type="term" value="F:superoxide dismutase activity"/>
    <property type="evidence" value="ECO:0000304"/>
    <property type="project" value="TAIR"/>
</dbReference>
<dbReference type="GO" id="GO:0071280">
    <property type="term" value="P:cellular response to copper ion"/>
    <property type="evidence" value="ECO:0000270"/>
    <property type="project" value="TAIR"/>
</dbReference>
<dbReference type="GO" id="GO:0071484">
    <property type="term" value="P:cellular response to light intensity"/>
    <property type="evidence" value="ECO:0000270"/>
    <property type="project" value="UniProtKB"/>
</dbReference>
<dbReference type="GO" id="GO:0034599">
    <property type="term" value="P:cellular response to oxidative stress"/>
    <property type="evidence" value="ECO:0000270"/>
    <property type="project" value="UniProtKB"/>
</dbReference>
<dbReference type="GO" id="GO:0071457">
    <property type="term" value="P:cellular response to ozone"/>
    <property type="evidence" value="ECO:0000270"/>
    <property type="project" value="UniProtKB"/>
</dbReference>
<dbReference type="GO" id="GO:0071472">
    <property type="term" value="P:cellular response to salt stress"/>
    <property type="evidence" value="ECO:0000270"/>
    <property type="project" value="UniProtKB"/>
</dbReference>
<dbReference type="GO" id="GO:0071329">
    <property type="term" value="P:cellular response to sucrose stimulus"/>
    <property type="evidence" value="ECO:0000270"/>
    <property type="project" value="UniProtKB"/>
</dbReference>
<dbReference type="GO" id="GO:0071493">
    <property type="term" value="P:cellular response to UV-B"/>
    <property type="evidence" value="ECO:0000270"/>
    <property type="project" value="UniProtKB"/>
</dbReference>
<dbReference type="GO" id="GO:0042742">
    <property type="term" value="P:defense response to bacterium"/>
    <property type="evidence" value="ECO:0000270"/>
    <property type="project" value="TAIR"/>
</dbReference>
<dbReference type="GO" id="GO:0035195">
    <property type="term" value="P:miRNA-mediated post-transcriptional gene silencing"/>
    <property type="evidence" value="ECO:0000270"/>
    <property type="project" value="UniProtKB"/>
</dbReference>
<dbReference type="GO" id="GO:0046688">
    <property type="term" value="P:response to copper ion"/>
    <property type="evidence" value="ECO:0000270"/>
    <property type="project" value="TAIR"/>
</dbReference>
<dbReference type="GO" id="GO:0010039">
    <property type="term" value="P:response to iron ion"/>
    <property type="evidence" value="ECO:0000270"/>
    <property type="project" value="TAIR"/>
</dbReference>
<dbReference type="GO" id="GO:0006979">
    <property type="term" value="P:response to oxidative stress"/>
    <property type="evidence" value="ECO:0000304"/>
    <property type="project" value="TAIR"/>
</dbReference>
<dbReference type="GO" id="GO:0010193">
    <property type="term" value="P:response to ozone"/>
    <property type="evidence" value="ECO:0000270"/>
    <property type="project" value="TAIR"/>
</dbReference>
<dbReference type="GO" id="GO:0009651">
    <property type="term" value="P:response to salt stress"/>
    <property type="evidence" value="ECO:0000270"/>
    <property type="project" value="TAIR"/>
</dbReference>
<dbReference type="CDD" id="cd00305">
    <property type="entry name" value="Cu-Zn_Superoxide_Dismutase"/>
    <property type="match status" value="1"/>
</dbReference>
<dbReference type="FunFam" id="2.60.40.200:FF:000001">
    <property type="entry name" value="Superoxide dismutase [Cu-Zn]"/>
    <property type="match status" value="1"/>
</dbReference>
<dbReference type="Gene3D" id="2.60.40.200">
    <property type="entry name" value="Superoxide dismutase, copper/zinc binding domain"/>
    <property type="match status" value="1"/>
</dbReference>
<dbReference type="InterPro" id="IPR036423">
    <property type="entry name" value="SOD-like_Cu/Zn_dom_sf"/>
</dbReference>
<dbReference type="InterPro" id="IPR024134">
    <property type="entry name" value="SOD_Cu/Zn_/chaperone"/>
</dbReference>
<dbReference type="InterPro" id="IPR018152">
    <property type="entry name" value="SOD_Cu/Zn_BS"/>
</dbReference>
<dbReference type="InterPro" id="IPR001424">
    <property type="entry name" value="SOD_Cu_Zn_dom"/>
</dbReference>
<dbReference type="PANTHER" id="PTHR10003">
    <property type="entry name" value="SUPEROXIDE DISMUTASE CU-ZN -RELATED"/>
    <property type="match status" value="1"/>
</dbReference>
<dbReference type="Pfam" id="PF00080">
    <property type="entry name" value="Sod_Cu"/>
    <property type="match status" value="1"/>
</dbReference>
<dbReference type="PRINTS" id="PR00068">
    <property type="entry name" value="CUZNDISMTASE"/>
</dbReference>
<dbReference type="SUPFAM" id="SSF49329">
    <property type="entry name" value="Cu,Zn superoxide dismutase-like"/>
    <property type="match status" value="1"/>
</dbReference>
<dbReference type="PROSITE" id="PS00087">
    <property type="entry name" value="SOD_CU_ZN_1"/>
    <property type="match status" value="1"/>
</dbReference>
<dbReference type="PROSITE" id="PS00332">
    <property type="entry name" value="SOD_CU_ZN_2"/>
    <property type="match status" value="1"/>
</dbReference>
<proteinExistence type="evidence at protein level"/>
<name>SODC1_ARATH</name>
<keyword id="KW-0049">Antioxidant</keyword>
<keyword id="KW-0186">Copper</keyword>
<keyword id="KW-0963">Cytoplasm</keyword>
<keyword id="KW-1015">Disulfide bond</keyword>
<keyword id="KW-0479">Metal-binding</keyword>
<keyword id="KW-0539">Nucleus</keyword>
<keyword id="KW-0560">Oxidoreductase</keyword>
<keyword id="KW-1185">Reference proteome</keyword>
<keyword id="KW-0862">Zinc</keyword>
<feature type="chain" id="PRO_0000164131" description="Superoxide dismutase [Cu-Zn] 1">
    <location>
        <begin position="1"/>
        <end position="152"/>
    </location>
</feature>
<feature type="binding site" evidence="1">
    <location>
        <position position="45"/>
    </location>
    <ligand>
        <name>Cu cation</name>
        <dbReference type="ChEBI" id="CHEBI:23378"/>
        <note>catalytic</note>
    </ligand>
</feature>
<feature type="binding site" evidence="1">
    <location>
        <position position="47"/>
    </location>
    <ligand>
        <name>Cu cation</name>
        <dbReference type="ChEBI" id="CHEBI:23378"/>
        <note>catalytic</note>
    </ligand>
</feature>
<feature type="binding site" evidence="1">
    <location>
        <position position="62"/>
    </location>
    <ligand>
        <name>Cu cation</name>
        <dbReference type="ChEBI" id="CHEBI:23378"/>
        <note>catalytic</note>
    </ligand>
</feature>
<feature type="binding site" evidence="1">
    <location>
        <position position="62"/>
    </location>
    <ligand>
        <name>Zn(2+)</name>
        <dbReference type="ChEBI" id="CHEBI:29105"/>
        <note>structural</note>
    </ligand>
</feature>
<feature type="binding site" evidence="1">
    <location>
        <position position="70"/>
    </location>
    <ligand>
        <name>Zn(2+)</name>
        <dbReference type="ChEBI" id="CHEBI:29105"/>
        <note>structural</note>
    </ligand>
</feature>
<feature type="binding site" evidence="1">
    <location>
        <position position="79"/>
    </location>
    <ligand>
        <name>Zn(2+)</name>
        <dbReference type="ChEBI" id="CHEBI:29105"/>
        <note>structural</note>
    </ligand>
</feature>
<feature type="binding site" evidence="1">
    <location>
        <position position="82"/>
    </location>
    <ligand>
        <name>Zn(2+)</name>
        <dbReference type="ChEBI" id="CHEBI:29105"/>
        <note>structural</note>
    </ligand>
</feature>
<feature type="binding site" evidence="1">
    <location>
        <position position="119"/>
    </location>
    <ligand>
        <name>Cu cation</name>
        <dbReference type="ChEBI" id="CHEBI:23378"/>
        <note>catalytic</note>
    </ligand>
</feature>
<feature type="disulfide bond" evidence="1">
    <location>
        <begin position="56"/>
        <end position="145"/>
    </location>
</feature>
<feature type="sequence conflict" description="In Ref. 2; ABN50366." evidence="8" ref="2">
    <original>I</original>
    <variation>F</variation>
    <location>
        <position position="148"/>
    </location>
</feature>
<gene>
    <name type="primary">CSD1</name>
    <name type="synonym">SODCC</name>
    <name type="ordered locus">At1g08830</name>
    <name type="ORF">F22O13.32</name>
</gene>